<feature type="chain" id="PRO_1000072846" description="Bifunctional glutamine synthetase adenylyltransferase/adenylyl-removing enzyme">
    <location>
        <begin position="1"/>
        <end position="998"/>
    </location>
</feature>
<feature type="region of interest" description="Adenylyl removase" evidence="1">
    <location>
        <begin position="1"/>
        <end position="487"/>
    </location>
</feature>
<feature type="region of interest" description="Adenylyl transferase" evidence="1">
    <location>
        <begin position="492"/>
        <end position="998"/>
    </location>
</feature>
<sequence>MVVTKPATQRPRLPSVGRLGLVDPQAAERMAQLGWYDHDDQAHVDLLWALSRAPDPDAALLALVRLAETPDAGWDELGAALLTERPLRGRLFAVLGSSLALGDHLVAQPRSWKLLRGNVSLPTHDELCAMFTGCVDEALADPGSAMVRLRTLYRDRLLVLAALDLAATVEDEPVLPFTVVAAHLSDLADAALAAALRVAEHNVCGDRTPPRLAVIAMGKCGARELNYVSDVDVIFVGERADTVTTRVASEMMRLASEAFFQVDAGLRPEGRSGELVRTVESHIAYYQRWAKTWEFQALLKARAAVGDAELGRRYLDALMPMVWVACEREDFVVEVQAMRRRVEQLVPADVRGREIKLGSGGLRDVEFAVQLLQLVHGRSDESLHVASTVDALAALGQGGYIGREDAANLTASYEFLRLLEHRLQLQRLKRTHLLPEADDEEAVRWLARAAHIRPDGRHDAAGVLREELRHQNLRVSQLHAKLFYQPLLESIGPAGLEIRHGMTSEAAERQLAALGYEGPQSALKHMSALVNQSGRRGRVQSVLLPRLLNWMSYAPDPDGGLLAYRRLSEALAGESWYLSTLRDKPAVARRLMHVLGTSAYVPDLLMRAPRVIQDYGDGPSGPRLLETDPAAVARALVASASRYSDPVRAIAGARTLRRRELARVASADLLGMLEVTDVCKALTSVWVAVLQAALDAMIRANLPDDGPQRGKAPAAIAVIGMGRLGGAELGYGSDADVMFVCEPAPGVDDSAAVRWAASVAEQVRTLLGTPSVDPPLDVDANLRPEGRNGPLVRTLASYAAYYEQWAQPWEIQALLRAHAVAGDAELGQRFLLMADKTRYPADGVSPEAVREIRRIKARVDAERLPRGADPNTHTKLGRGGLADIEWTVQLLQLLHAHEVPALHNTSTLECLDAIAEAGLVPADEVDLLRQAWLTATRARNALVLVRGKPTDQLPGPGRQLNAVAVAAGWPTDEGGEFLDNYLRVTRRAKAVVRKVFGS</sequence>
<dbReference type="EC" id="2.7.7.89" evidence="1"/>
<dbReference type="EC" id="2.7.7.42" evidence="1"/>
<dbReference type="EMBL" id="CP000479">
    <property type="protein sequence ID" value="ABK69160.1"/>
    <property type="molecule type" value="Genomic_DNA"/>
</dbReference>
<dbReference type="RefSeq" id="WP_009976481.1">
    <property type="nucleotide sequence ID" value="NC_008595.1"/>
</dbReference>
<dbReference type="SMR" id="A0QEW1"/>
<dbReference type="KEGG" id="mav:MAV_2245"/>
<dbReference type="HOGENOM" id="CLU_006233_1_0_11"/>
<dbReference type="Proteomes" id="UP000001574">
    <property type="component" value="Chromosome"/>
</dbReference>
<dbReference type="GO" id="GO:0005829">
    <property type="term" value="C:cytosol"/>
    <property type="evidence" value="ECO:0007669"/>
    <property type="project" value="TreeGrafter"/>
</dbReference>
<dbReference type="GO" id="GO:0008882">
    <property type="term" value="F:[glutamate-ammonia-ligase] adenylyltransferase activity"/>
    <property type="evidence" value="ECO:0007669"/>
    <property type="project" value="UniProtKB-UniRule"/>
</dbReference>
<dbReference type="GO" id="GO:0047388">
    <property type="term" value="F:[glutamine synthetase]-adenylyl-L-tyrosine phosphorylase activity"/>
    <property type="evidence" value="ECO:0007669"/>
    <property type="project" value="UniProtKB-EC"/>
</dbReference>
<dbReference type="GO" id="GO:0005524">
    <property type="term" value="F:ATP binding"/>
    <property type="evidence" value="ECO:0007669"/>
    <property type="project" value="UniProtKB-UniRule"/>
</dbReference>
<dbReference type="GO" id="GO:0000287">
    <property type="term" value="F:magnesium ion binding"/>
    <property type="evidence" value="ECO:0007669"/>
    <property type="project" value="UniProtKB-UniRule"/>
</dbReference>
<dbReference type="GO" id="GO:0000820">
    <property type="term" value="P:regulation of glutamine family amino acid metabolic process"/>
    <property type="evidence" value="ECO:0007669"/>
    <property type="project" value="UniProtKB-UniRule"/>
</dbReference>
<dbReference type="CDD" id="cd05401">
    <property type="entry name" value="NT_GlnE_GlnD_like"/>
    <property type="match status" value="2"/>
</dbReference>
<dbReference type="FunFam" id="1.20.120.330:FF:000022">
    <property type="entry name" value="Bifunctional glutamine synthetase adenylyltransferase/adenylyl-removing enzyme"/>
    <property type="match status" value="1"/>
</dbReference>
<dbReference type="Gene3D" id="3.30.460.10">
    <property type="entry name" value="Beta Polymerase, domain 2"/>
    <property type="match status" value="2"/>
</dbReference>
<dbReference type="Gene3D" id="1.20.120.330">
    <property type="entry name" value="Nucleotidyltransferases domain 2"/>
    <property type="match status" value="2"/>
</dbReference>
<dbReference type="HAMAP" id="MF_00802">
    <property type="entry name" value="GlnE"/>
    <property type="match status" value="1"/>
</dbReference>
<dbReference type="InterPro" id="IPR023057">
    <property type="entry name" value="GlnE"/>
</dbReference>
<dbReference type="InterPro" id="IPR005190">
    <property type="entry name" value="GlnE_rpt_dom"/>
</dbReference>
<dbReference type="InterPro" id="IPR043519">
    <property type="entry name" value="NT_sf"/>
</dbReference>
<dbReference type="InterPro" id="IPR013546">
    <property type="entry name" value="PII_UdlTrfase/GS_AdlTrfase"/>
</dbReference>
<dbReference type="NCBIfam" id="NF010707">
    <property type="entry name" value="PRK14109.1"/>
    <property type="match status" value="1"/>
</dbReference>
<dbReference type="PANTHER" id="PTHR30621:SF0">
    <property type="entry name" value="BIFUNCTIONAL GLUTAMINE SYNTHETASE ADENYLYLTRANSFERASE_ADENYLYL-REMOVING ENZYME"/>
    <property type="match status" value="1"/>
</dbReference>
<dbReference type="PANTHER" id="PTHR30621">
    <property type="entry name" value="GLUTAMINE SYNTHETASE ADENYLYLTRANSFERASE"/>
    <property type="match status" value="1"/>
</dbReference>
<dbReference type="Pfam" id="PF08335">
    <property type="entry name" value="GlnD_UR_UTase"/>
    <property type="match status" value="2"/>
</dbReference>
<dbReference type="Pfam" id="PF03710">
    <property type="entry name" value="GlnE"/>
    <property type="match status" value="2"/>
</dbReference>
<dbReference type="SUPFAM" id="SSF81301">
    <property type="entry name" value="Nucleotidyltransferase"/>
    <property type="match status" value="2"/>
</dbReference>
<dbReference type="SUPFAM" id="SSF81593">
    <property type="entry name" value="Nucleotidyltransferase substrate binding subunit/domain"/>
    <property type="match status" value="2"/>
</dbReference>
<organism>
    <name type="scientific">Mycobacterium avium (strain 104)</name>
    <dbReference type="NCBI Taxonomy" id="243243"/>
    <lineage>
        <taxon>Bacteria</taxon>
        <taxon>Bacillati</taxon>
        <taxon>Actinomycetota</taxon>
        <taxon>Actinomycetes</taxon>
        <taxon>Mycobacteriales</taxon>
        <taxon>Mycobacteriaceae</taxon>
        <taxon>Mycobacterium</taxon>
        <taxon>Mycobacterium avium complex (MAC)</taxon>
    </lineage>
</organism>
<accession>A0QEW1</accession>
<protein>
    <recommendedName>
        <fullName evidence="1">Bifunctional glutamine synthetase adenylyltransferase/adenylyl-removing enzyme</fullName>
    </recommendedName>
    <alternativeName>
        <fullName evidence="1">ATP:glutamine synthetase adenylyltransferase</fullName>
    </alternativeName>
    <alternativeName>
        <fullName evidence="1">ATase</fullName>
    </alternativeName>
    <domain>
        <recommendedName>
            <fullName evidence="1">Glutamine synthetase adenylyl-L-tyrosine phosphorylase</fullName>
            <ecNumber evidence="1">2.7.7.89</ecNumber>
        </recommendedName>
        <alternativeName>
            <fullName evidence="1">Adenylyl removase</fullName>
            <shortName evidence="1">AR</shortName>
            <shortName evidence="1">AT-N</shortName>
        </alternativeName>
    </domain>
    <domain>
        <recommendedName>
            <fullName evidence="1">Glutamine synthetase adenylyl transferase</fullName>
            <ecNumber evidence="1">2.7.7.42</ecNumber>
        </recommendedName>
        <alternativeName>
            <fullName evidence="1">Adenylyl transferase</fullName>
            <shortName evidence="1">AT</shortName>
            <shortName evidence="1">AT-C</shortName>
        </alternativeName>
    </domain>
</protein>
<reference key="1">
    <citation type="submission" date="2006-10" db="EMBL/GenBank/DDBJ databases">
        <authorList>
            <person name="Fleischmann R.D."/>
            <person name="Dodson R.J."/>
            <person name="Haft D.H."/>
            <person name="Merkel J.S."/>
            <person name="Nelson W.C."/>
            <person name="Fraser C.M."/>
        </authorList>
    </citation>
    <scope>NUCLEOTIDE SEQUENCE [LARGE SCALE GENOMIC DNA]</scope>
    <source>
        <strain>104</strain>
    </source>
</reference>
<comment type="function">
    <text evidence="1">Involved in the regulation of glutamine synthetase GlnA, a key enzyme in the process to assimilate ammonia. When cellular nitrogen levels are high, the C-terminal adenylyl transferase (AT) inactivates GlnA by covalent transfer of an adenylyl group from ATP to specific tyrosine residue of GlnA, thus reducing its activity. Conversely, when nitrogen levels are low, the N-terminal adenylyl removase (AR) activates GlnA by removing the adenylyl group by phosphorolysis, increasing its activity. The regulatory region of GlnE binds the signal transduction protein PII (GlnB) which indicates the nitrogen status of the cell.</text>
</comment>
<comment type="catalytic activity">
    <reaction evidence="1">
        <text>[glutamine synthetase]-O(4)-(5'-adenylyl)-L-tyrosine + phosphate = [glutamine synthetase]-L-tyrosine + ADP</text>
        <dbReference type="Rhea" id="RHEA:43716"/>
        <dbReference type="Rhea" id="RHEA-COMP:10660"/>
        <dbReference type="Rhea" id="RHEA-COMP:10661"/>
        <dbReference type="ChEBI" id="CHEBI:43474"/>
        <dbReference type="ChEBI" id="CHEBI:46858"/>
        <dbReference type="ChEBI" id="CHEBI:83624"/>
        <dbReference type="ChEBI" id="CHEBI:456216"/>
        <dbReference type="EC" id="2.7.7.89"/>
    </reaction>
</comment>
<comment type="catalytic activity">
    <reaction evidence="1">
        <text>[glutamine synthetase]-L-tyrosine + ATP = [glutamine synthetase]-O(4)-(5'-adenylyl)-L-tyrosine + diphosphate</text>
        <dbReference type="Rhea" id="RHEA:18589"/>
        <dbReference type="Rhea" id="RHEA-COMP:10660"/>
        <dbReference type="Rhea" id="RHEA-COMP:10661"/>
        <dbReference type="ChEBI" id="CHEBI:30616"/>
        <dbReference type="ChEBI" id="CHEBI:33019"/>
        <dbReference type="ChEBI" id="CHEBI:46858"/>
        <dbReference type="ChEBI" id="CHEBI:83624"/>
        <dbReference type="EC" id="2.7.7.42"/>
    </reaction>
</comment>
<comment type="cofactor">
    <cofactor evidence="1">
        <name>Mg(2+)</name>
        <dbReference type="ChEBI" id="CHEBI:18420"/>
    </cofactor>
</comment>
<comment type="similarity">
    <text evidence="1">Belongs to the GlnE family.</text>
</comment>
<keyword id="KW-0067">ATP-binding</keyword>
<keyword id="KW-0460">Magnesium</keyword>
<keyword id="KW-0511">Multifunctional enzyme</keyword>
<keyword id="KW-0547">Nucleotide-binding</keyword>
<keyword id="KW-0548">Nucleotidyltransferase</keyword>
<keyword id="KW-0808">Transferase</keyword>
<evidence type="ECO:0000255" key="1">
    <source>
        <dbReference type="HAMAP-Rule" id="MF_00802"/>
    </source>
</evidence>
<name>GLNE_MYCA1</name>
<gene>
    <name evidence="1" type="primary">glnE</name>
    <name type="ordered locus">MAV_2245</name>
</gene>
<proteinExistence type="inferred from homology"/>